<comment type="function">
    <text evidence="1">Catalyzes the conversion of glucosamine-6-phosphate to glucosamine-1-phosphate.</text>
</comment>
<comment type="catalytic activity">
    <reaction evidence="1">
        <text>alpha-D-glucosamine 1-phosphate = D-glucosamine 6-phosphate</text>
        <dbReference type="Rhea" id="RHEA:23424"/>
        <dbReference type="ChEBI" id="CHEBI:58516"/>
        <dbReference type="ChEBI" id="CHEBI:58725"/>
        <dbReference type="EC" id="5.4.2.10"/>
    </reaction>
</comment>
<comment type="cofactor">
    <cofactor evidence="1">
        <name>Mg(2+)</name>
        <dbReference type="ChEBI" id="CHEBI:18420"/>
    </cofactor>
    <text evidence="1">Binds 1 Mg(2+) ion per subunit.</text>
</comment>
<comment type="PTM">
    <text evidence="1">Activated by phosphorylation.</text>
</comment>
<comment type="similarity">
    <text evidence="1">Belongs to the phosphohexose mutase family.</text>
</comment>
<organism>
    <name type="scientific">Nocardia farcinica (strain IFM 10152)</name>
    <dbReference type="NCBI Taxonomy" id="247156"/>
    <lineage>
        <taxon>Bacteria</taxon>
        <taxon>Bacillati</taxon>
        <taxon>Actinomycetota</taxon>
        <taxon>Actinomycetes</taxon>
        <taxon>Mycobacteriales</taxon>
        <taxon>Nocardiaceae</taxon>
        <taxon>Nocardia</taxon>
    </lineage>
</organism>
<reference key="1">
    <citation type="journal article" date="2004" name="Proc. Natl. Acad. Sci. U.S.A.">
        <title>The complete genomic sequence of Nocardia farcinica IFM 10152.</title>
        <authorList>
            <person name="Ishikawa J."/>
            <person name="Yamashita A."/>
            <person name="Mikami Y."/>
            <person name="Hoshino Y."/>
            <person name="Kurita H."/>
            <person name="Hotta K."/>
            <person name="Shiba T."/>
            <person name="Hattori M."/>
        </authorList>
    </citation>
    <scope>NUCLEOTIDE SEQUENCE [LARGE SCALE GENOMIC DNA]</scope>
    <source>
        <strain>IFM 10152</strain>
    </source>
</reference>
<sequence>MGRLFGTDGVRGLANGSLSPELALRVSGAAAQVLGRGKTRALALVGRDPRASGEMLEAAVTAGLTAAGVNVLSVGVLPTPAVAYLTGLYDACLGVMISASHNPMPDNGIKIFAAGGHKLDDAVEDRIEALVAADDPVRPTGAGIGRVLNASGARDHGLHIPDQYSVEGTHERYVEHLVEATGRDLSGLTVVVDCANGAAAEVGPAAYREAGATVIAINAEPDGLNINDGCGSTHLDQVRRAVVEHGADLGLAHDGDADRCLAVAADGSVVDGDAILAVLAIAMKESGELAQDTLVATVMSNLGLHLAMRAAGIAVRTTAVGDRYVLEELRAGGYTLGGEQSGHVVFPKYGTTGDGVLTGLKLMARMAQTGRSLADLAGVLTTVPQVLVNVPVSDKAAVAAAPDVREAVADAERELGDSGRILLRPSGTEQLVRVMVEATDPVKAEQLAADLAKLVASL</sequence>
<gene>
    <name evidence="1" type="primary">glmM</name>
    <name type="ordered locus">NFA_8680</name>
</gene>
<accession>Q5Z1H8</accession>
<name>GLMM_NOCFA</name>
<evidence type="ECO:0000255" key="1">
    <source>
        <dbReference type="HAMAP-Rule" id="MF_01554"/>
    </source>
</evidence>
<proteinExistence type="inferred from homology"/>
<feature type="chain" id="PRO_0000147926" description="Phosphoglucosamine mutase">
    <location>
        <begin position="1"/>
        <end position="458"/>
    </location>
</feature>
<feature type="active site" description="Phosphoserine intermediate" evidence="1">
    <location>
        <position position="100"/>
    </location>
</feature>
<feature type="binding site" description="via phosphate group" evidence="1">
    <location>
        <position position="100"/>
    </location>
    <ligand>
        <name>Mg(2+)</name>
        <dbReference type="ChEBI" id="CHEBI:18420"/>
    </ligand>
</feature>
<feature type="binding site" evidence="1">
    <location>
        <position position="254"/>
    </location>
    <ligand>
        <name>Mg(2+)</name>
        <dbReference type="ChEBI" id="CHEBI:18420"/>
    </ligand>
</feature>
<feature type="binding site" evidence="1">
    <location>
        <position position="256"/>
    </location>
    <ligand>
        <name>Mg(2+)</name>
        <dbReference type="ChEBI" id="CHEBI:18420"/>
    </ligand>
</feature>
<feature type="binding site" evidence="1">
    <location>
        <position position="258"/>
    </location>
    <ligand>
        <name>Mg(2+)</name>
        <dbReference type="ChEBI" id="CHEBI:18420"/>
    </ligand>
</feature>
<feature type="modified residue" description="Phosphoserine" evidence="1">
    <location>
        <position position="100"/>
    </location>
</feature>
<dbReference type="EC" id="5.4.2.10" evidence="1"/>
<dbReference type="EMBL" id="AP006618">
    <property type="protein sequence ID" value="BAD55713.1"/>
    <property type="molecule type" value="Genomic_DNA"/>
</dbReference>
<dbReference type="RefSeq" id="WP_011207398.1">
    <property type="nucleotide sequence ID" value="NC_006361.1"/>
</dbReference>
<dbReference type="SMR" id="Q5Z1H8"/>
<dbReference type="STRING" id="247156.NFA_8680"/>
<dbReference type="GeneID" id="61131696"/>
<dbReference type="KEGG" id="nfa:NFA_8680"/>
<dbReference type="eggNOG" id="COG1109">
    <property type="taxonomic scope" value="Bacteria"/>
</dbReference>
<dbReference type="HOGENOM" id="CLU_016950_7_0_11"/>
<dbReference type="OrthoDB" id="9803322at2"/>
<dbReference type="Proteomes" id="UP000006820">
    <property type="component" value="Chromosome"/>
</dbReference>
<dbReference type="GO" id="GO:0005829">
    <property type="term" value="C:cytosol"/>
    <property type="evidence" value="ECO:0007669"/>
    <property type="project" value="TreeGrafter"/>
</dbReference>
<dbReference type="GO" id="GO:0000287">
    <property type="term" value="F:magnesium ion binding"/>
    <property type="evidence" value="ECO:0007669"/>
    <property type="project" value="UniProtKB-UniRule"/>
</dbReference>
<dbReference type="GO" id="GO:0008966">
    <property type="term" value="F:phosphoglucosamine mutase activity"/>
    <property type="evidence" value="ECO:0007669"/>
    <property type="project" value="UniProtKB-UniRule"/>
</dbReference>
<dbReference type="GO" id="GO:0004615">
    <property type="term" value="F:phosphomannomutase activity"/>
    <property type="evidence" value="ECO:0007669"/>
    <property type="project" value="TreeGrafter"/>
</dbReference>
<dbReference type="GO" id="GO:0005975">
    <property type="term" value="P:carbohydrate metabolic process"/>
    <property type="evidence" value="ECO:0007669"/>
    <property type="project" value="InterPro"/>
</dbReference>
<dbReference type="GO" id="GO:0009252">
    <property type="term" value="P:peptidoglycan biosynthetic process"/>
    <property type="evidence" value="ECO:0007669"/>
    <property type="project" value="TreeGrafter"/>
</dbReference>
<dbReference type="GO" id="GO:0006048">
    <property type="term" value="P:UDP-N-acetylglucosamine biosynthetic process"/>
    <property type="evidence" value="ECO:0007669"/>
    <property type="project" value="TreeGrafter"/>
</dbReference>
<dbReference type="CDD" id="cd05802">
    <property type="entry name" value="GlmM"/>
    <property type="match status" value="1"/>
</dbReference>
<dbReference type="FunFam" id="3.30.310.50:FF:000001">
    <property type="entry name" value="Phosphoglucosamine mutase"/>
    <property type="match status" value="1"/>
</dbReference>
<dbReference type="FunFam" id="3.40.120.10:FF:000001">
    <property type="entry name" value="Phosphoglucosamine mutase"/>
    <property type="match status" value="1"/>
</dbReference>
<dbReference type="FunFam" id="3.40.120.10:FF:000002">
    <property type="entry name" value="Phosphoglucosamine mutase"/>
    <property type="match status" value="1"/>
</dbReference>
<dbReference type="Gene3D" id="3.40.120.10">
    <property type="entry name" value="Alpha-D-Glucose-1,6-Bisphosphate, subunit A, domain 3"/>
    <property type="match status" value="3"/>
</dbReference>
<dbReference type="Gene3D" id="3.30.310.50">
    <property type="entry name" value="Alpha-D-phosphohexomutase, C-terminal domain"/>
    <property type="match status" value="1"/>
</dbReference>
<dbReference type="HAMAP" id="MF_01554_B">
    <property type="entry name" value="GlmM_B"/>
    <property type="match status" value="1"/>
</dbReference>
<dbReference type="InterPro" id="IPR005844">
    <property type="entry name" value="A-D-PHexomutase_a/b/a-I"/>
</dbReference>
<dbReference type="InterPro" id="IPR016055">
    <property type="entry name" value="A-D-PHexomutase_a/b/a-I/II/III"/>
</dbReference>
<dbReference type="InterPro" id="IPR005845">
    <property type="entry name" value="A-D-PHexomutase_a/b/a-II"/>
</dbReference>
<dbReference type="InterPro" id="IPR005846">
    <property type="entry name" value="A-D-PHexomutase_a/b/a-III"/>
</dbReference>
<dbReference type="InterPro" id="IPR005843">
    <property type="entry name" value="A-D-PHexomutase_C"/>
</dbReference>
<dbReference type="InterPro" id="IPR036900">
    <property type="entry name" value="A-D-PHexomutase_C_sf"/>
</dbReference>
<dbReference type="InterPro" id="IPR016066">
    <property type="entry name" value="A-D-PHexomutase_CS"/>
</dbReference>
<dbReference type="InterPro" id="IPR005841">
    <property type="entry name" value="Alpha-D-phosphohexomutase_SF"/>
</dbReference>
<dbReference type="InterPro" id="IPR006352">
    <property type="entry name" value="GlmM_bact"/>
</dbReference>
<dbReference type="InterPro" id="IPR050060">
    <property type="entry name" value="Phosphoglucosamine_mutase"/>
</dbReference>
<dbReference type="NCBIfam" id="TIGR01455">
    <property type="entry name" value="glmM"/>
    <property type="match status" value="1"/>
</dbReference>
<dbReference type="PANTHER" id="PTHR42946:SF1">
    <property type="entry name" value="PHOSPHOGLUCOMUTASE (ALPHA-D-GLUCOSE-1,6-BISPHOSPHATE-DEPENDENT)"/>
    <property type="match status" value="1"/>
</dbReference>
<dbReference type="PANTHER" id="PTHR42946">
    <property type="entry name" value="PHOSPHOHEXOSE MUTASE"/>
    <property type="match status" value="1"/>
</dbReference>
<dbReference type="Pfam" id="PF02878">
    <property type="entry name" value="PGM_PMM_I"/>
    <property type="match status" value="1"/>
</dbReference>
<dbReference type="Pfam" id="PF02879">
    <property type="entry name" value="PGM_PMM_II"/>
    <property type="match status" value="1"/>
</dbReference>
<dbReference type="Pfam" id="PF02880">
    <property type="entry name" value="PGM_PMM_III"/>
    <property type="match status" value="1"/>
</dbReference>
<dbReference type="Pfam" id="PF00408">
    <property type="entry name" value="PGM_PMM_IV"/>
    <property type="match status" value="1"/>
</dbReference>
<dbReference type="PRINTS" id="PR00509">
    <property type="entry name" value="PGMPMM"/>
</dbReference>
<dbReference type="SUPFAM" id="SSF55957">
    <property type="entry name" value="Phosphoglucomutase, C-terminal domain"/>
    <property type="match status" value="1"/>
</dbReference>
<dbReference type="SUPFAM" id="SSF53738">
    <property type="entry name" value="Phosphoglucomutase, first 3 domains"/>
    <property type="match status" value="3"/>
</dbReference>
<dbReference type="PROSITE" id="PS00710">
    <property type="entry name" value="PGM_PMM"/>
    <property type="match status" value="1"/>
</dbReference>
<keyword id="KW-0413">Isomerase</keyword>
<keyword id="KW-0460">Magnesium</keyword>
<keyword id="KW-0479">Metal-binding</keyword>
<keyword id="KW-0597">Phosphoprotein</keyword>
<keyword id="KW-1185">Reference proteome</keyword>
<protein>
    <recommendedName>
        <fullName evidence="1">Phosphoglucosamine mutase</fullName>
        <ecNumber evidence="1">5.4.2.10</ecNumber>
    </recommendedName>
</protein>